<evidence type="ECO:0000250" key="1"/>
<evidence type="ECO:0000255" key="2">
    <source>
        <dbReference type="HAMAP-Rule" id="MF_00062"/>
    </source>
</evidence>
<name>CYSN_METEP</name>
<organism>
    <name type="scientific">Methylorubrum extorquens (strain PA1)</name>
    <name type="common">Methylobacterium extorquens</name>
    <dbReference type="NCBI Taxonomy" id="419610"/>
    <lineage>
        <taxon>Bacteria</taxon>
        <taxon>Pseudomonadati</taxon>
        <taxon>Pseudomonadota</taxon>
        <taxon>Alphaproteobacteria</taxon>
        <taxon>Hyphomicrobiales</taxon>
        <taxon>Methylobacteriaceae</taxon>
        <taxon>Methylorubrum</taxon>
    </lineage>
</organism>
<comment type="function">
    <text evidence="2">With CysD forms the ATP sulfurylase (ATPS) that catalyzes the adenylation of sulfate producing adenosine 5'-phosphosulfate (APS) and diphosphate, the first enzymatic step in sulfur assimilation pathway. APS synthesis involves the formation of a high-energy phosphoric-sulfuric acid anhydride bond driven by GTP hydrolysis by CysN coupled to ATP hydrolysis by CysD.</text>
</comment>
<comment type="catalytic activity">
    <reaction evidence="2">
        <text>sulfate + ATP + H(+) = adenosine 5'-phosphosulfate + diphosphate</text>
        <dbReference type="Rhea" id="RHEA:18133"/>
        <dbReference type="ChEBI" id="CHEBI:15378"/>
        <dbReference type="ChEBI" id="CHEBI:16189"/>
        <dbReference type="ChEBI" id="CHEBI:30616"/>
        <dbReference type="ChEBI" id="CHEBI:33019"/>
        <dbReference type="ChEBI" id="CHEBI:58243"/>
        <dbReference type="EC" id="2.7.7.4"/>
    </reaction>
</comment>
<comment type="pathway">
    <text evidence="2">Sulfur metabolism; hydrogen sulfide biosynthesis; sulfite from sulfate: step 1/3.</text>
</comment>
<comment type="subunit">
    <text evidence="2">Heterodimer composed of CysD, the smaller subunit, and CysN.</text>
</comment>
<comment type="similarity">
    <text evidence="2">Belongs to the TRAFAC class translation factor GTPase superfamily. Classic translation factor GTPase family. CysN/NodQ subfamily.</text>
</comment>
<proteinExistence type="inferred from homology"/>
<protein>
    <recommendedName>
        <fullName evidence="2">Sulfate adenylyltransferase subunit 1</fullName>
        <ecNumber evidence="2">2.7.7.4</ecNumber>
    </recommendedName>
    <alternativeName>
        <fullName evidence="2">ATP-sulfurylase large subunit</fullName>
    </alternativeName>
    <alternativeName>
        <fullName evidence="2">Sulfate adenylate transferase</fullName>
        <shortName evidence="2">SAT</shortName>
    </alternativeName>
</protein>
<keyword id="KW-0067">ATP-binding</keyword>
<keyword id="KW-0342">GTP-binding</keyword>
<keyword id="KW-0547">Nucleotide-binding</keyword>
<keyword id="KW-0548">Nucleotidyltransferase</keyword>
<keyword id="KW-0808">Transferase</keyword>
<reference key="1">
    <citation type="submission" date="2007-12" db="EMBL/GenBank/DDBJ databases">
        <title>Complete sequence of Methylobacterium extorquens PA1.</title>
        <authorList>
            <consortium name="US DOE Joint Genome Institute"/>
            <person name="Copeland A."/>
            <person name="Lucas S."/>
            <person name="Lapidus A."/>
            <person name="Barry K."/>
            <person name="Glavina del Rio T."/>
            <person name="Dalin E."/>
            <person name="Tice H."/>
            <person name="Pitluck S."/>
            <person name="Saunders E."/>
            <person name="Brettin T."/>
            <person name="Bruce D."/>
            <person name="Detter J.C."/>
            <person name="Han C."/>
            <person name="Schmutz J."/>
            <person name="Larimer F."/>
            <person name="Land M."/>
            <person name="Hauser L."/>
            <person name="Kyrpides N."/>
            <person name="Kim E."/>
            <person name="Marx C."/>
            <person name="Richardson P."/>
        </authorList>
    </citation>
    <scope>NUCLEOTIDE SEQUENCE [LARGE SCALE GENOMIC DNA]</scope>
    <source>
        <strain>PA1</strain>
    </source>
</reference>
<sequence length="469" mass="50238">MTIHQSPEAFGYDAFLRQHQNKEVLRFITCGSVDDGKSTLIGRLLHDTKQIFDDQVTALQRDSRKHGTQGGEVDLALLVDGLQAEREQGITIDVAYRFFSTDRRSFIVADTPGHEQYTRNMATGASTADLAVILVDARHGLTRQSRRHALLVSLLGIRRVALAINKMDLVGWSQDKFEAIVSGFQAFAAPLNFTEVRAIPLSAKNGDNVVLPGTAATWYTDVPLLRYLEEVPVKSEERAAAFRMPVQWVNRPNSDFRGFSGLIASGSVAPGDAVTVAPSGKTSTIARIFTADGDLERASEGQSVTLVLADEVDASRGAVIATSDAPLTLTDSLDVRLFWAAESDLVPGANLWAKVGTQTVNAVVKAVHRRIDPETGQAGPADKLAVNDIGDVTLTLDRQIAVDPYAENRDTGSLILIDRETTDTAALGLVQRVVASSKVAPAPTASVTASAEPARSGGLLAGLKRLFGG</sequence>
<gene>
    <name evidence="2" type="primary">cysN</name>
    <name type="ordered locus">Mext_2232</name>
</gene>
<feature type="chain" id="PRO_1000092146" description="Sulfate adenylyltransferase subunit 1">
    <location>
        <begin position="1"/>
        <end position="469"/>
    </location>
</feature>
<feature type="domain" description="tr-type G">
    <location>
        <begin position="22"/>
        <end position="237"/>
    </location>
</feature>
<feature type="region of interest" description="G1" evidence="1">
    <location>
        <begin position="31"/>
        <end position="38"/>
    </location>
</feature>
<feature type="region of interest" description="G2" evidence="1">
    <location>
        <begin position="89"/>
        <end position="93"/>
    </location>
</feature>
<feature type="region of interest" description="G3" evidence="1">
    <location>
        <begin position="110"/>
        <end position="113"/>
    </location>
</feature>
<feature type="region of interest" description="G4" evidence="1">
    <location>
        <begin position="165"/>
        <end position="168"/>
    </location>
</feature>
<feature type="region of interest" description="G5" evidence="1">
    <location>
        <begin position="202"/>
        <end position="204"/>
    </location>
</feature>
<feature type="binding site" evidence="2">
    <location>
        <begin position="31"/>
        <end position="38"/>
    </location>
    <ligand>
        <name>GTP</name>
        <dbReference type="ChEBI" id="CHEBI:37565"/>
    </ligand>
</feature>
<feature type="binding site" evidence="2">
    <location>
        <begin position="110"/>
        <end position="114"/>
    </location>
    <ligand>
        <name>GTP</name>
        <dbReference type="ChEBI" id="CHEBI:37565"/>
    </ligand>
</feature>
<feature type="binding site" evidence="2">
    <location>
        <begin position="165"/>
        <end position="168"/>
    </location>
    <ligand>
        <name>GTP</name>
        <dbReference type="ChEBI" id="CHEBI:37565"/>
    </ligand>
</feature>
<accession>A9W4X1</accession>
<dbReference type="EC" id="2.7.7.4" evidence="2"/>
<dbReference type="EMBL" id="CP000908">
    <property type="protein sequence ID" value="ABY30627.1"/>
    <property type="molecule type" value="Genomic_DNA"/>
</dbReference>
<dbReference type="RefSeq" id="WP_012253685.1">
    <property type="nucleotide sequence ID" value="NC_010172.1"/>
</dbReference>
<dbReference type="SMR" id="A9W4X1"/>
<dbReference type="KEGG" id="mex:Mext_2232"/>
<dbReference type="eggNOG" id="COG2895">
    <property type="taxonomic scope" value="Bacteria"/>
</dbReference>
<dbReference type="HOGENOM" id="CLU_007265_5_2_5"/>
<dbReference type="BioCyc" id="MEXT419610:MEXT_RS11260-MONOMER"/>
<dbReference type="UniPathway" id="UPA00140">
    <property type="reaction ID" value="UER00204"/>
</dbReference>
<dbReference type="GO" id="GO:0005524">
    <property type="term" value="F:ATP binding"/>
    <property type="evidence" value="ECO:0007669"/>
    <property type="project" value="UniProtKB-KW"/>
</dbReference>
<dbReference type="GO" id="GO:0005525">
    <property type="term" value="F:GTP binding"/>
    <property type="evidence" value="ECO:0007669"/>
    <property type="project" value="UniProtKB-UniRule"/>
</dbReference>
<dbReference type="GO" id="GO:0003924">
    <property type="term" value="F:GTPase activity"/>
    <property type="evidence" value="ECO:0007669"/>
    <property type="project" value="InterPro"/>
</dbReference>
<dbReference type="GO" id="GO:0004781">
    <property type="term" value="F:sulfate adenylyltransferase (ATP) activity"/>
    <property type="evidence" value="ECO:0007669"/>
    <property type="project" value="UniProtKB-UniRule"/>
</dbReference>
<dbReference type="GO" id="GO:0070814">
    <property type="term" value="P:hydrogen sulfide biosynthetic process"/>
    <property type="evidence" value="ECO:0007669"/>
    <property type="project" value="UniProtKB-UniRule"/>
</dbReference>
<dbReference type="GO" id="GO:0000103">
    <property type="term" value="P:sulfate assimilation"/>
    <property type="evidence" value="ECO:0007669"/>
    <property type="project" value="UniProtKB-UniRule"/>
</dbReference>
<dbReference type="CDD" id="cd04166">
    <property type="entry name" value="CysN_ATPS"/>
    <property type="match status" value="1"/>
</dbReference>
<dbReference type="CDD" id="cd03695">
    <property type="entry name" value="CysN_NodQ_II"/>
    <property type="match status" value="1"/>
</dbReference>
<dbReference type="CDD" id="cd04095">
    <property type="entry name" value="CysN_NoDQ_III"/>
    <property type="match status" value="1"/>
</dbReference>
<dbReference type="FunFam" id="3.40.50.300:FF:000119">
    <property type="entry name" value="Sulfate adenylyltransferase subunit 1"/>
    <property type="match status" value="1"/>
</dbReference>
<dbReference type="Gene3D" id="3.40.50.300">
    <property type="entry name" value="P-loop containing nucleotide triphosphate hydrolases"/>
    <property type="match status" value="1"/>
</dbReference>
<dbReference type="Gene3D" id="2.40.30.10">
    <property type="entry name" value="Translation factors"/>
    <property type="match status" value="2"/>
</dbReference>
<dbReference type="HAMAP" id="MF_00062">
    <property type="entry name" value="Sulf_adenylyltr_sub1"/>
    <property type="match status" value="1"/>
</dbReference>
<dbReference type="InterPro" id="IPR041757">
    <property type="entry name" value="CysN_GTP-bd"/>
</dbReference>
<dbReference type="InterPro" id="IPR044138">
    <property type="entry name" value="CysN_II"/>
</dbReference>
<dbReference type="InterPro" id="IPR044139">
    <property type="entry name" value="CysN_NoDQ_III"/>
</dbReference>
<dbReference type="InterPro" id="IPR031157">
    <property type="entry name" value="G_TR_CS"/>
</dbReference>
<dbReference type="InterPro" id="IPR054696">
    <property type="entry name" value="GTP-eEF1A_C"/>
</dbReference>
<dbReference type="InterPro" id="IPR027417">
    <property type="entry name" value="P-loop_NTPase"/>
</dbReference>
<dbReference type="InterPro" id="IPR011779">
    <property type="entry name" value="SO4_adenylTrfase_lsu"/>
</dbReference>
<dbReference type="InterPro" id="IPR000795">
    <property type="entry name" value="T_Tr_GTP-bd_dom"/>
</dbReference>
<dbReference type="InterPro" id="IPR050100">
    <property type="entry name" value="TRAFAC_GTPase_members"/>
</dbReference>
<dbReference type="InterPro" id="IPR009000">
    <property type="entry name" value="Transl_B-barrel_sf"/>
</dbReference>
<dbReference type="InterPro" id="IPR009001">
    <property type="entry name" value="Transl_elong_EF1A/Init_IF2_C"/>
</dbReference>
<dbReference type="NCBIfam" id="TIGR02034">
    <property type="entry name" value="CysN"/>
    <property type="match status" value="1"/>
</dbReference>
<dbReference type="NCBIfam" id="NF003478">
    <property type="entry name" value="PRK05124.1"/>
    <property type="match status" value="1"/>
</dbReference>
<dbReference type="PANTHER" id="PTHR23115">
    <property type="entry name" value="TRANSLATION FACTOR"/>
    <property type="match status" value="1"/>
</dbReference>
<dbReference type="Pfam" id="PF22594">
    <property type="entry name" value="GTP-eEF1A_C"/>
    <property type="match status" value="1"/>
</dbReference>
<dbReference type="Pfam" id="PF00009">
    <property type="entry name" value="GTP_EFTU"/>
    <property type="match status" value="1"/>
</dbReference>
<dbReference type="PRINTS" id="PR00315">
    <property type="entry name" value="ELONGATNFCT"/>
</dbReference>
<dbReference type="SUPFAM" id="SSF50465">
    <property type="entry name" value="EF-Tu/eEF-1alpha/eIF2-gamma C-terminal domain"/>
    <property type="match status" value="1"/>
</dbReference>
<dbReference type="SUPFAM" id="SSF52540">
    <property type="entry name" value="P-loop containing nucleoside triphosphate hydrolases"/>
    <property type="match status" value="1"/>
</dbReference>
<dbReference type="SUPFAM" id="SSF50447">
    <property type="entry name" value="Translation proteins"/>
    <property type="match status" value="1"/>
</dbReference>
<dbReference type="PROSITE" id="PS00301">
    <property type="entry name" value="G_TR_1"/>
    <property type="match status" value="1"/>
</dbReference>
<dbReference type="PROSITE" id="PS51722">
    <property type="entry name" value="G_TR_2"/>
    <property type="match status" value="1"/>
</dbReference>